<sequence>MVMTDPIADMLTRIRNANMVRHEKLEIPASKLKREIADILKREGFIRDVEFVEDSKQGIIRVFLKYGQNNERVITGLKRISKPGLRVYAKSNEVPRVLNGLGIAIISTSQGVLTDKEARAKQAGGEVLAYVW</sequence>
<proteinExistence type="inferred from homology"/>
<dbReference type="EMBL" id="CP000560">
    <property type="protein sequence ID" value="ABS72578.1"/>
    <property type="molecule type" value="Genomic_DNA"/>
</dbReference>
<dbReference type="RefSeq" id="WP_003156489.1">
    <property type="nucleotide sequence ID" value="NC_009725.2"/>
</dbReference>
<dbReference type="SMR" id="A7Z0Q2"/>
<dbReference type="GeneID" id="93079294"/>
<dbReference type="KEGG" id="bay:RBAM_001550"/>
<dbReference type="HOGENOM" id="CLU_098428_0_2_9"/>
<dbReference type="Proteomes" id="UP000001120">
    <property type="component" value="Chromosome"/>
</dbReference>
<dbReference type="GO" id="GO:1990904">
    <property type="term" value="C:ribonucleoprotein complex"/>
    <property type="evidence" value="ECO:0007669"/>
    <property type="project" value="UniProtKB-KW"/>
</dbReference>
<dbReference type="GO" id="GO:0005840">
    <property type="term" value="C:ribosome"/>
    <property type="evidence" value="ECO:0007669"/>
    <property type="project" value="UniProtKB-KW"/>
</dbReference>
<dbReference type="GO" id="GO:0019843">
    <property type="term" value="F:rRNA binding"/>
    <property type="evidence" value="ECO:0007669"/>
    <property type="project" value="UniProtKB-UniRule"/>
</dbReference>
<dbReference type="GO" id="GO:0003735">
    <property type="term" value="F:structural constituent of ribosome"/>
    <property type="evidence" value="ECO:0007669"/>
    <property type="project" value="InterPro"/>
</dbReference>
<dbReference type="GO" id="GO:0006412">
    <property type="term" value="P:translation"/>
    <property type="evidence" value="ECO:0007669"/>
    <property type="project" value="UniProtKB-UniRule"/>
</dbReference>
<dbReference type="FunFam" id="3.30.1370.30:FF:000002">
    <property type="entry name" value="30S ribosomal protein S8"/>
    <property type="match status" value="1"/>
</dbReference>
<dbReference type="FunFam" id="3.30.1490.10:FF:000001">
    <property type="entry name" value="30S ribosomal protein S8"/>
    <property type="match status" value="1"/>
</dbReference>
<dbReference type="Gene3D" id="3.30.1370.30">
    <property type="match status" value="1"/>
</dbReference>
<dbReference type="Gene3D" id="3.30.1490.10">
    <property type="match status" value="1"/>
</dbReference>
<dbReference type="HAMAP" id="MF_01302_B">
    <property type="entry name" value="Ribosomal_uS8_B"/>
    <property type="match status" value="1"/>
</dbReference>
<dbReference type="InterPro" id="IPR000630">
    <property type="entry name" value="Ribosomal_uS8"/>
</dbReference>
<dbReference type="InterPro" id="IPR047863">
    <property type="entry name" value="Ribosomal_uS8_CS"/>
</dbReference>
<dbReference type="InterPro" id="IPR035987">
    <property type="entry name" value="Ribosomal_uS8_sf"/>
</dbReference>
<dbReference type="NCBIfam" id="NF001109">
    <property type="entry name" value="PRK00136.1"/>
    <property type="match status" value="1"/>
</dbReference>
<dbReference type="PANTHER" id="PTHR11758">
    <property type="entry name" value="40S RIBOSOMAL PROTEIN S15A"/>
    <property type="match status" value="1"/>
</dbReference>
<dbReference type="Pfam" id="PF00410">
    <property type="entry name" value="Ribosomal_S8"/>
    <property type="match status" value="1"/>
</dbReference>
<dbReference type="SUPFAM" id="SSF56047">
    <property type="entry name" value="Ribosomal protein S8"/>
    <property type="match status" value="1"/>
</dbReference>
<dbReference type="PROSITE" id="PS00053">
    <property type="entry name" value="RIBOSOMAL_S8"/>
    <property type="match status" value="1"/>
</dbReference>
<keyword id="KW-0687">Ribonucleoprotein</keyword>
<keyword id="KW-0689">Ribosomal protein</keyword>
<keyword id="KW-0694">RNA-binding</keyword>
<keyword id="KW-0699">rRNA-binding</keyword>
<name>RS8_BACVZ</name>
<comment type="function">
    <text evidence="1">One of the primary rRNA binding proteins, it binds directly to 16S rRNA central domain where it helps coordinate assembly of the platform of the 30S subunit.</text>
</comment>
<comment type="subunit">
    <text evidence="1">Part of the 30S ribosomal subunit. Contacts proteins S5 and S12.</text>
</comment>
<comment type="similarity">
    <text evidence="1">Belongs to the universal ribosomal protein uS8 family.</text>
</comment>
<protein>
    <recommendedName>
        <fullName evidence="1">Small ribosomal subunit protein uS8</fullName>
    </recommendedName>
    <alternativeName>
        <fullName evidence="2">30S ribosomal protein S8</fullName>
    </alternativeName>
</protein>
<accession>A7Z0Q2</accession>
<organism>
    <name type="scientific">Bacillus velezensis (strain DSM 23117 / BGSC 10A6 / LMG 26770 / FZB42)</name>
    <name type="common">Bacillus amyloliquefaciens subsp. plantarum</name>
    <dbReference type="NCBI Taxonomy" id="326423"/>
    <lineage>
        <taxon>Bacteria</taxon>
        <taxon>Bacillati</taxon>
        <taxon>Bacillota</taxon>
        <taxon>Bacilli</taxon>
        <taxon>Bacillales</taxon>
        <taxon>Bacillaceae</taxon>
        <taxon>Bacillus</taxon>
        <taxon>Bacillus amyloliquefaciens group</taxon>
    </lineage>
</organism>
<gene>
    <name evidence="1" type="primary">rpsH</name>
    <name type="ordered locus">RBAM_001550</name>
</gene>
<reference key="1">
    <citation type="journal article" date="2007" name="Nat. Biotechnol.">
        <title>Comparative analysis of the complete genome sequence of the plant growth-promoting bacterium Bacillus amyloliquefaciens FZB42.</title>
        <authorList>
            <person name="Chen X.H."/>
            <person name="Koumoutsi A."/>
            <person name="Scholz R."/>
            <person name="Eisenreich A."/>
            <person name="Schneider K."/>
            <person name="Heinemeyer I."/>
            <person name="Morgenstern B."/>
            <person name="Voss B."/>
            <person name="Hess W.R."/>
            <person name="Reva O."/>
            <person name="Junge H."/>
            <person name="Voigt B."/>
            <person name="Jungblut P.R."/>
            <person name="Vater J."/>
            <person name="Suessmuth R."/>
            <person name="Liesegang H."/>
            <person name="Strittmatter A."/>
            <person name="Gottschalk G."/>
            <person name="Borriss R."/>
        </authorList>
    </citation>
    <scope>NUCLEOTIDE SEQUENCE [LARGE SCALE GENOMIC DNA]</scope>
    <source>
        <strain>DSM 23117 / BGSC 10A6 / LMG 26770 / FZB42</strain>
    </source>
</reference>
<evidence type="ECO:0000255" key="1">
    <source>
        <dbReference type="HAMAP-Rule" id="MF_01302"/>
    </source>
</evidence>
<evidence type="ECO:0000305" key="2"/>
<feature type="chain" id="PRO_1000051766" description="Small ribosomal subunit protein uS8">
    <location>
        <begin position="1"/>
        <end position="132"/>
    </location>
</feature>